<feature type="chain" id="PRO_0000352646" description="Cutinase 1">
    <location>
        <begin position="1" status="less than"/>
        <end position="7" status="greater than"/>
    </location>
</feature>
<feature type="non-terminal residue" evidence="6">
    <location>
        <position position="1"/>
    </location>
</feature>
<feature type="non-terminal residue" evidence="6">
    <location>
        <position position="7"/>
    </location>
</feature>
<comment type="function">
    <text evidence="1 5">Catalyzes the hydrolysis of complex carboxylic polyesters found in the cell wall of plants (PubMed:17043825). Degrades cutin, a macromolecule that forms the structure of the plant cuticle (PubMed:17043825). Allows pathogenic fungi to penetrate through the cuticular barrier into the host plant during the initial stage of fungal infection (By similarity).</text>
</comment>
<comment type="catalytic activity">
    <reaction evidence="3 4 8">
        <text>cutin + H2O = cutin monomers.</text>
        <dbReference type="EC" id="3.1.1.74"/>
    </reaction>
</comment>
<comment type="activity regulation">
    <text evidence="5">Inhibited by diisopropyl fluorophosphate (DFP).</text>
</comment>
<comment type="subcellular location">
    <subcellularLocation>
        <location evidence="5">Secreted</location>
    </subcellularLocation>
</comment>
<comment type="induction">
    <text evidence="5">By contact with cutin.</text>
</comment>
<comment type="PTM">
    <text evidence="5">The N-terminus is blocked.</text>
</comment>
<comment type="miscellaneous">
    <text evidence="5">On the 2D-gel the determined MW is: 21.7 kDa.</text>
</comment>
<comment type="similarity">
    <text evidence="2">Belongs to the cutinase family.</text>
</comment>
<dbReference type="EC" id="3.1.1.74" evidence="3 4 8"/>
<dbReference type="GO" id="GO:0005576">
    <property type="term" value="C:extracellular region"/>
    <property type="evidence" value="ECO:0000314"/>
    <property type="project" value="UniProtKB"/>
</dbReference>
<dbReference type="GO" id="GO:0050525">
    <property type="term" value="F:cutinase activity"/>
    <property type="evidence" value="ECO:0000314"/>
    <property type="project" value="UniProtKB"/>
</dbReference>
<accession>P86010</accession>
<keyword id="KW-0903">Direct protein sequencing</keyword>
<keyword id="KW-0378">Hydrolase</keyword>
<keyword id="KW-0964">Secreted</keyword>
<keyword id="KW-0719">Serine esterase</keyword>
<keyword id="KW-0843">Virulence</keyword>
<proteinExistence type="evidence at protein level"/>
<sequence length="7" mass="881">VIYIFAR</sequence>
<protein>
    <recommendedName>
        <fullName evidence="6">Cutinase 1</fullName>
        <ecNumber evidence="3 4 8">3.1.1.74</ecNumber>
    </recommendedName>
    <alternativeName>
        <fullName>Cutin hydrolase 1</fullName>
    </alternativeName>
</protein>
<evidence type="ECO:0000250" key="1">
    <source>
        <dbReference type="UniProtKB" id="P00590"/>
    </source>
</evidence>
<evidence type="ECO:0000255" key="2"/>
<evidence type="ECO:0000255" key="3">
    <source>
        <dbReference type="PROSITE-ProRule" id="PRU10108"/>
    </source>
</evidence>
<evidence type="ECO:0000255" key="4">
    <source>
        <dbReference type="PROSITE-ProRule" id="PRU10109"/>
    </source>
</evidence>
<evidence type="ECO:0000269" key="5">
    <source>
    </source>
</evidence>
<evidence type="ECO:0000303" key="6">
    <source>
    </source>
</evidence>
<evidence type="ECO:0000305" key="7"/>
<evidence type="ECO:0000305" key="8">
    <source>
    </source>
</evidence>
<reference evidence="7" key="1">
    <citation type="journal article" date="2007" name="Appl. Microbiol. Biotechnol.">
        <title>Purification and identification of cutinases from Colletotrichum kahawae and Colletotrichum gloeosporioides.</title>
        <authorList>
            <person name="Chen Z."/>
            <person name="Franco C.F."/>
            <person name="Baptista R.P."/>
            <person name="Cabral J.M.S."/>
            <person name="Coelho A.V."/>
            <person name="Rodrigues C.J. Jr."/>
            <person name="Melo E.P."/>
        </authorList>
    </citation>
    <scope>PROTEIN SEQUENCE</scope>
    <scope>FUNCTION</scope>
    <scope>CATALYTIC ACTIVITY</scope>
    <scope>ACTIVITY REGULATION</scope>
    <scope>SUBCELLULAR LOCATION</scope>
    <scope>INDUCTION</scope>
    <scope>BLOCKAGE OF N-TERMINUS</scope>
    <source>
        <strain evidence="5">Z1</strain>
    </source>
</reference>
<name>CUTI1_COLKA</name>
<organism>
    <name type="scientific">Colletotrichum kahawae</name>
    <name type="common">Coffee berry disease fungus</name>
    <dbReference type="NCBI Taxonomy" id="34407"/>
    <lineage>
        <taxon>Eukaryota</taxon>
        <taxon>Fungi</taxon>
        <taxon>Dikarya</taxon>
        <taxon>Ascomycota</taxon>
        <taxon>Pezizomycotina</taxon>
        <taxon>Sordariomycetes</taxon>
        <taxon>Hypocreomycetidae</taxon>
        <taxon>Glomerellales</taxon>
        <taxon>Glomerellaceae</taxon>
        <taxon>Colletotrichum</taxon>
        <taxon>Colletotrichum gloeosporioides species complex</taxon>
    </lineage>
</organism>